<name>Y002_NPVAC</name>
<keyword id="KW-0244">Early protein</keyword>
<keyword id="KW-1185">Reference proteome</keyword>
<sequence>MARVKIGEFKFGEDTFNLRYVLERDQQVRFVAKDVANSLKYTVCDKAIRVHVDNKYKSLFEQTIQNGGPTSNSVVKRGDPLYLQPHTVLITKSGVIQLIMKSKLPYAIELQEWLLEEVIPQVLCTGKYDPAIKQREEESKQLVTKLIATFTEHTNALQAVVAQKTEELVKKQEFIERIVAIKDKQIEAKDLQVTRVMTDLNRMYTGFQETMQKKDEIMQKKDAQVTDLVAKVVDLSDRAVQYPADKRKHPVLCVTRDGTTFTAITGQKTYVENQKHKRNINVANIVVENIRPNPTVDWNNATDRLQAKRSKRSIVLVRWKKRNNLKIG</sequence>
<organism>
    <name type="scientific">Autographa californica nuclear polyhedrosis virus</name>
    <name type="common">AcMNPV</name>
    <dbReference type="NCBI Taxonomy" id="46015"/>
    <lineage>
        <taxon>Viruses</taxon>
        <taxon>Viruses incertae sedis</taxon>
        <taxon>Naldaviricetes</taxon>
        <taxon>Lefavirales</taxon>
        <taxon>Baculoviridae</taxon>
        <taxon>Alphabaculovirus</taxon>
        <taxon>Alphabaculovirus aucalifornicae</taxon>
    </lineage>
</organism>
<organismHost>
    <name type="scientific">Lepidoptera</name>
    <name type="common">butterflies and moths</name>
    <dbReference type="NCBI Taxonomy" id="7088"/>
</organismHost>
<accession>P24655</accession>
<protein>
    <recommendedName>
        <fullName>Uncharacterized Bro-N domain-containing protein ORF2</fullName>
    </recommendedName>
</protein>
<reference key="1">
    <citation type="journal article" date="1991" name="Virology">
        <title>Nucleotide sequence of the Autographa californica nuclear polyhedrosis 9.4 kbp EcoRI-I and -R (polyhedrin gene) region.</title>
        <authorList>
            <person name="Possee R.D."/>
            <person name="Sun T.P."/>
            <person name="Howard S.C."/>
            <person name="Ayres M.D."/>
            <person name="Hill-Perkins M."/>
            <person name="Gearing K.L."/>
        </authorList>
    </citation>
    <scope>NUCLEOTIDE SEQUENCE [GENOMIC DNA]</scope>
    <source>
        <strain>C6</strain>
    </source>
</reference>
<reference key="2">
    <citation type="journal article" date="1994" name="Virology">
        <title>The complete DNA sequence of Autographa californica nuclear polyhedrosis virus.</title>
        <authorList>
            <person name="Ayres M.D."/>
            <person name="Howard S.C."/>
            <person name="Kuzio J."/>
            <person name="Lopez-Ferber M."/>
            <person name="Possee R.D."/>
        </authorList>
    </citation>
    <scope>NUCLEOTIDE SEQUENCE [LARGE SCALE GENOMIC DNA]</scope>
    <source>
        <strain>C6</strain>
    </source>
</reference>
<reference key="3">
    <citation type="journal article" date="1991" name="J. Gen. Virol.">
        <title>Nucleotide sequence and transcript mapping of the HindIII F region of the Autographa californica nuclear polyhedrosis virus genome.</title>
        <authorList>
            <person name="Tilakaratne N."/>
            <person name="Hardin S.E."/>
            <person name="Weaver R.F."/>
        </authorList>
    </citation>
    <scope>NUCLEOTIDE SEQUENCE [GENOMIC DNA]</scope>
</reference>
<evidence type="ECO:0000255" key="1">
    <source>
        <dbReference type="PROSITE-ProRule" id="PRU01086"/>
    </source>
</evidence>
<evidence type="ECO:0000305" key="2"/>
<feature type="chain" id="PRO_0000132940" description="Uncharacterized Bro-N domain-containing protein ORF2">
    <location>
        <begin position="1"/>
        <end position="328"/>
    </location>
</feature>
<feature type="domain" description="Bro-N" evidence="1">
    <location>
        <begin position="3"/>
        <end position="126"/>
    </location>
</feature>
<feature type="sequence conflict" description="In Ref. 3." evidence="2" ref="3">
    <original>C</original>
    <variation>V</variation>
    <location>
        <position position="124"/>
    </location>
</feature>
<feature type="sequence conflict" description="In Ref. 3." evidence="2" ref="3">
    <original>K</original>
    <variation>A</variation>
    <location>
        <position position="127"/>
    </location>
</feature>
<feature type="sequence conflict" description="In Ref. 3." evidence="2" ref="3">
    <original>K</original>
    <variation>L</variation>
    <location>
        <position position="268"/>
    </location>
</feature>
<feature type="sequence conflict" description="In Ref. 3." evidence="2" ref="3">
    <original>N</original>
    <variation>M</variation>
    <location>
        <position position="273"/>
    </location>
</feature>
<feature type="sequence conflict" description="In Ref. 3." evidence="2" ref="3">
    <original>K</original>
    <variation>L</variation>
    <location>
        <position position="275"/>
    </location>
</feature>
<feature type="sequence conflict" description="In Ref. 3." evidence="2" ref="3">
    <original>K</original>
    <variation>L</variation>
    <location>
        <position position="277"/>
    </location>
</feature>
<feature type="sequence conflict" description="In Ref. 3." evidence="2" ref="3">
    <original>N</original>
    <variation>M</variation>
    <location>
        <position position="279"/>
    </location>
</feature>
<feature type="sequence conflict" description="In Ref. 3." evidence="2" ref="3">
    <original>N</original>
    <variation>M</variation>
    <location>
        <position position="281"/>
    </location>
</feature>
<proteinExistence type="predicted"/>
<dbReference type="EMBL" id="M75679">
    <property type="status" value="NOT_ANNOTATED_CDS"/>
    <property type="molecule type" value="Genomic_DNA"/>
</dbReference>
<dbReference type="EMBL" id="L22858">
    <property type="protein sequence ID" value="AAA66632.1"/>
    <property type="molecule type" value="Genomic_DNA"/>
</dbReference>
<dbReference type="PIR" id="B38477">
    <property type="entry name" value="B38477"/>
</dbReference>
<dbReference type="PIR" id="B72850">
    <property type="entry name" value="B72850"/>
</dbReference>
<dbReference type="RefSeq" id="NP_054031.1">
    <property type="nucleotide sequence ID" value="NC_001623.1"/>
</dbReference>
<dbReference type="SMR" id="P24655"/>
<dbReference type="GeneID" id="1403834"/>
<dbReference type="KEGG" id="vg:1403834"/>
<dbReference type="OrthoDB" id="5316at10239"/>
<dbReference type="Proteomes" id="UP000008292">
    <property type="component" value="Segment"/>
</dbReference>
<dbReference type="InterPro" id="IPR003497">
    <property type="entry name" value="BRO_N_domain"/>
</dbReference>
<dbReference type="Pfam" id="PF02498">
    <property type="entry name" value="Bro-N"/>
    <property type="match status" value="1"/>
</dbReference>
<dbReference type="SMART" id="SM01040">
    <property type="entry name" value="Bro-N"/>
    <property type="match status" value="1"/>
</dbReference>
<dbReference type="PROSITE" id="PS51750">
    <property type="entry name" value="BRO_N"/>
    <property type="match status" value="1"/>
</dbReference>
<comment type="miscellaneous">
    <text>Probably expressed early and still present late in infection.</text>
</comment>